<proteinExistence type="inferred from homology"/>
<reference key="1">
    <citation type="journal article" date="2004" name="Nature">
        <title>Genome sequence of Silicibacter pomeroyi reveals adaptations to the marine environment.</title>
        <authorList>
            <person name="Moran M.A."/>
            <person name="Buchan A."/>
            <person name="Gonzalez J.M."/>
            <person name="Heidelberg J.F."/>
            <person name="Whitman W.B."/>
            <person name="Kiene R.P."/>
            <person name="Henriksen J.R."/>
            <person name="King G.M."/>
            <person name="Belas R."/>
            <person name="Fuqua C."/>
            <person name="Brinkac L.M."/>
            <person name="Lewis M."/>
            <person name="Johri S."/>
            <person name="Weaver B."/>
            <person name="Pai G."/>
            <person name="Eisen J.A."/>
            <person name="Rahe E."/>
            <person name="Sheldon W.M."/>
            <person name="Ye W."/>
            <person name="Miller T.R."/>
            <person name="Carlton J."/>
            <person name="Rasko D.A."/>
            <person name="Paulsen I.T."/>
            <person name="Ren Q."/>
            <person name="Daugherty S.C."/>
            <person name="DeBoy R.T."/>
            <person name="Dodson R.J."/>
            <person name="Durkin A.S."/>
            <person name="Madupu R."/>
            <person name="Nelson W.C."/>
            <person name="Sullivan S.A."/>
            <person name="Rosovitz M.J."/>
            <person name="Haft D.H."/>
            <person name="Selengut J."/>
            <person name="Ward N."/>
        </authorList>
    </citation>
    <scope>NUCLEOTIDE SEQUENCE [LARGE SCALE GENOMIC DNA]</scope>
    <source>
        <strain>ATCC 700808 / DSM 15171 / DSS-3</strain>
    </source>
</reference>
<reference key="2">
    <citation type="journal article" date="2014" name="Stand. Genomic Sci.">
        <title>An updated genome annotation for the model marine bacterium Ruegeria pomeroyi DSS-3.</title>
        <authorList>
            <person name="Rivers A.R."/>
            <person name="Smith C.B."/>
            <person name="Moran M.A."/>
        </authorList>
    </citation>
    <scope>GENOME REANNOTATION</scope>
    <source>
        <strain>ATCC 700808 / DSM 15171 / DSS-3</strain>
    </source>
</reference>
<accession>Q5LW93</accession>
<organism>
    <name type="scientific">Ruegeria pomeroyi (strain ATCC 700808 / DSM 15171 / DSS-3)</name>
    <name type="common">Silicibacter pomeroyi</name>
    <dbReference type="NCBI Taxonomy" id="246200"/>
    <lineage>
        <taxon>Bacteria</taxon>
        <taxon>Pseudomonadati</taxon>
        <taxon>Pseudomonadota</taxon>
        <taxon>Alphaproteobacteria</taxon>
        <taxon>Rhodobacterales</taxon>
        <taxon>Roseobacteraceae</taxon>
        <taxon>Ruegeria</taxon>
    </lineage>
</organism>
<feature type="chain" id="PRO_0000181442" description="Probable nicotinate-nucleotide adenylyltransferase">
    <location>
        <begin position="1"/>
        <end position="213"/>
    </location>
</feature>
<sequence length="213" mass="23709">MRQGFPYARPGQVIGLFGGSFDPPHAGHVHVTREALKMFGLDRVWWLVTPGNPLKAHGPAPLDRRMEAARAMMRHPRVDVTDIEAHLGTRVTADTIAALRRIYPRVRFVWLMGADNLAQLHRWKDWRQIIETVPVGVLARPGDRISARMSPAARAYAPYRIDGQARHLLGRAEAPAWCFVNVPMVDVSSTRIRAAGGWSAAQQGRGQTGTQDQ</sequence>
<name>NADD_RUEPO</name>
<dbReference type="EC" id="2.7.7.18" evidence="1"/>
<dbReference type="EMBL" id="CP000031">
    <property type="protein sequence ID" value="AAV93767.1"/>
    <property type="molecule type" value="Genomic_DNA"/>
</dbReference>
<dbReference type="RefSeq" id="WP_011046210.1">
    <property type="nucleotide sequence ID" value="NC_003911.12"/>
</dbReference>
<dbReference type="SMR" id="Q5LW93"/>
<dbReference type="STRING" id="246200.SPO0449"/>
<dbReference type="PaxDb" id="246200-SPO0449"/>
<dbReference type="DNASU" id="3193074"/>
<dbReference type="KEGG" id="sil:SPO0449"/>
<dbReference type="eggNOG" id="COG1057">
    <property type="taxonomic scope" value="Bacteria"/>
</dbReference>
<dbReference type="HOGENOM" id="CLU_069765_2_0_5"/>
<dbReference type="OrthoDB" id="5295945at2"/>
<dbReference type="UniPathway" id="UPA00253">
    <property type="reaction ID" value="UER00332"/>
</dbReference>
<dbReference type="Proteomes" id="UP000001023">
    <property type="component" value="Chromosome"/>
</dbReference>
<dbReference type="GO" id="GO:0005524">
    <property type="term" value="F:ATP binding"/>
    <property type="evidence" value="ECO:0007669"/>
    <property type="project" value="UniProtKB-KW"/>
</dbReference>
<dbReference type="GO" id="GO:0004515">
    <property type="term" value="F:nicotinate-nucleotide adenylyltransferase activity"/>
    <property type="evidence" value="ECO:0007669"/>
    <property type="project" value="UniProtKB-UniRule"/>
</dbReference>
<dbReference type="GO" id="GO:0009435">
    <property type="term" value="P:NAD biosynthetic process"/>
    <property type="evidence" value="ECO:0007669"/>
    <property type="project" value="UniProtKB-UniRule"/>
</dbReference>
<dbReference type="CDD" id="cd02165">
    <property type="entry name" value="NMNAT"/>
    <property type="match status" value="1"/>
</dbReference>
<dbReference type="Gene3D" id="3.40.50.620">
    <property type="entry name" value="HUPs"/>
    <property type="match status" value="1"/>
</dbReference>
<dbReference type="HAMAP" id="MF_00244">
    <property type="entry name" value="NaMN_adenylyltr"/>
    <property type="match status" value="1"/>
</dbReference>
<dbReference type="InterPro" id="IPR004821">
    <property type="entry name" value="Cyt_trans-like"/>
</dbReference>
<dbReference type="InterPro" id="IPR005248">
    <property type="entry name" value="NadD/NMNAT"/>
</dbReference>
<dbReference type="InterPro" id="IPR014729">
    <property type="entry name" value="Rossmann-like_a/b/a_fold"/>
</dbReference>
<dbReference type="NCBIfam" id="TIGR00125">
    <property type="entry name" value="cyt_tran_rel"/>
    <property type="match status" value="1"/>
</dbReference>
<dbReference type="NCBIfam" id="TIGR00482">
    <property type="entry name" value="nicotinate (nicotinamide) nucleotide adenylyltransferase"/>
    <property type="match status" value="1"/>
</dbReference>
<dbReference type="NCBIfam" id="NF000843">
    <property type="entry name" value="PRK00071.2-2"/>
    <property type="match status" value="1"/>
</dbReference>
<dbReference type="NCBIfam" id="NF000845">
    <property type="entry name" value="PRK00071.2-4"/>
    <property type="match status" value="1"/>
</dbReference>
<dbReference type="PANTHER" id="PTHR39321">
    <property type="entry name" value="NICOTINATE-NUCLEOTIDE ADENYLYLTRANSFERASE-RELATED"/>
    <property type="match status" value="1"/>
</dbReference>
<dbReference type="PANTHER" id="PTHR39321:SF3">
    <property type="entry name" value="PHOSPHOPANTETHEINE ADENYLYLTRANSFERASE"/>
    <property type="match status" value="1"/>
</dbReference>
<dbReference type="Pfam" id="PF01467">
    <property type="entry name" value="CTP_transf_like"/>
    <property type="match status" value="1"/>
</dbReference>
<dbReference type="SUPFAM" id="SSF52374">
    <property type="entry name" value="Nucleotidylyl transferase"/>
    <property type="match status" value="1"/>
</dbReference>
<keyword id="KW-0067">ATP-binding</keyword>
<keyword id="KW-0520">NAD</keyword>
<keyword id="KW-0547">Nucleotide-binding</keyword>
<keyword id="KW-0548">Nucleotidyltransferase</keyword>
<keyword id="KW-0662">Pyridine nucleotide biosynthesis</keyword>
<keyword id="KW-1185">Reference proteome</keyword>
<keyword id="KW-0808">Transferase</keyword>
<protein>
    <recommendedName>
        <fullName evidence="1">Probable nicotinate-nucleotide adenylyltransferase</fullName>
        <ecNumber evidence="1">2.7.7.18</ecNumber>
    </recommendedName>
    <alternativeName>
        <fullName evidence="1">Deamido-NAD(+) diphosphorylase</fullName>
    </alternativeName>
    <alternativeName>
        <fullName evidence="1">Deamido-NAD(+) pyrophosphorylase</fullName>
    </alternativeName>
    <alternativeName>
        <fullName evidence="1">Nicotinate mononucleotide adenylyltransferase</fullName>
        <shortName evidence="1">NaMN adenylyltransferase</shortName>
    </alternativeName>
</protein>
<gene>
    <name evidence="1" type="primary">nadD</name>
    <name type="ordered locus">SPO0449</name>
</gene>
<comment type="function">
    <text evidence="1">Catalyzes the reversible adenylation of nicotinate mononucleotide (NaMN) to nicotinic acid adenine dinucleotide (NaAD).</text>
</comment>
<comment type="catalytic activity">
    <reaction evidence="1">
        <text>nicotinate beta-D-ribonucleotide + ATP + H(+) = deamido-NAD(+) + diphosphate</text>
        <dbReference type="Rhea" id="RHEA:22860"/>
        <dbReference type="ChEBI" id="CHEBI:15378"/>
        <dbReference type="ChEBI" id="CHEBI:30616"/>
        <dbReference type="ChEBI" id="CHEBI:33019"/>
        <dbReference type="ChEBI" id="CHEBI:57502"/>
        <dbReference type="ChEBI" id="CHEBI:58437"/>
        <dbReference type="EC" id="2.7.7.18"/>
    </reaction>
</comment>
<comment type="pathway">
    <text evidence="1">Cofactor biosynthesis; NAD(+) biosynthesis; deamido-NAD(+) from nicotinate D-ribonucleotide: step 1/1.</text>
</comment>
<comment type="similarity">
    <text evidence="1">Belongs to the NadD family.</text>
</comment>
<evidence type="ECO:0000255" key="1">
    <source>
        <dbReference type="HAMAP-Rule" id="MF_00244"/>
    </source>
</evidence>